<sequence>MTTTGSNSNHNHHESNNNNNNPSTRSWGTAVSGQSVSTSGSMGSPSSRSEQTITVVTSTSDTTFQRLNNLDIQGDDAGSQGASGVKKKKRGQRAAGPDKTGRGLRQFSMKVCEKVESKGRTTYNEVADELVAEFALPNNDGTSPDQQQYDEKNIRRRVYDALNVLMAMDIISKDKKEIQWRGLPRTSLSDIEELKNERLSLRNRIEKKTAYSQELEEQYVGLQNLIQRNEHLYSSGNAPSGGVALPFILVQTRPHATVEVEISEDMQLVHFDFNSTPFELHDDNFVLKTMKFCDQPPQQPNGRNNSQLVCHNFTPENPNKGPSTGPTPQLDMYETHLQSQQHQQHSQLQIIPMPETNNVTSSADTAPVKSPSLPGIMNSSMKPEN</sequence>
<accession>Q9FNY2</accession>
<accession>Q8LDG3</accession>
<accession>Q9LZE7</accession>
<feature type="chain" id="PRO_0000405865" description="Transcription factor-like protein DPB">
    <location>
        <begin position="1"/>
        <end position="385"/>
    </location>
</feature>
<feature type="DNA-binding region" evidence="2">
    <location>
        <begin position="101"/>
        <end position="184"/>
    </location>
</feature>
<feature type="region of interest" description="Disordered" evidence="3">
    <location>
        <begin position="1"/>
        <end position="53"/>
    </location>
</feature>
<feature type="region of interest" description="Disordered" evidence="3">
    <location>
        <begin position="71"/>
        <end position="102"/>
    </location>
</feature>
<feature type="region of interest" description="Disordered" evidence="3">
    <location>
        <begin position="296"/>
        <end position="385"/>
    </location>
</feature>
<feature type="coiled-coil region" evidence="2">
    <location>
        <begin position="185"/>
        <end position="234"/>
    </location>
</feature>
<feature type="short sequence motif" description="DEF box" evidence="1">
    <location>
        <begin position="150"/>
        <end position="184"/>
    </location>
</feature>
<feature type="compositionally biased region" description="Polar residues" evidence="3">
    <location>
        <begin position="22"/>
        <end position="31"/>
    </location>
</feature>
<feature type="compositionally biased region" description="Low complexity" evidence="3">
    <location>
        <begin position="32"/>
        <end position="53"/>
    </location>
</feature>
<feature type="compositionally biased region" description="Polar residues" evidence="3">
    <location>
        <begin position="300"/>
        <end position="327"/>
    </location>
</feature>
<feature type="compositionally biased region" description="Low complexity" evidence="3">
    <location>
        <begin position="336"/>
        <end position="349"/>
    </location>
</feature>
<feature type="compositionally biased region" description="Polar residues" evidence="3">
    <location>
        <begin position="355"/>
        <end position="364"/>
    </location>
</feature>
<feature type="splice variant" id="VSP_040734" description="In isoform 2." evidence="10">
    <original>RQFSMKV</original>
    <variation>L</variation>
    <location>
        <begin position="105"/>
        <end position="111"/>
    </location>
</feature>
<feature type="sequence conflict" description="In Ref. 4; AAM63227." evidence="10" ref="4">
    <original>G</original>
    <variation>S</variation>
    <location>
        <position position="40"/>
    </location>
</feature>
<feature type="sequence conflict" description="In Ref. 4; AAM63227." evidence="10" ref="4">
    <original>T</original>
    <variation>A</variation>
    <location>
        <position position="59"/>
    </location>
</feature>
<feature type="sequence conflict" description="In Ref. 4; AAM63227." evidence="10" ref="4">
    <original>R</original>
    <variation>Q</variation>
    <location>
        <position position="303"/>
    </location>
</feature>
<feature type="sequence conflict" description="In Ref. 4; AAM63227." evidence="10" ref="4">
    <original>G</original>
    <variation>R</variation>
    <location>
        <position position="375"/>
    </location>
</feature>
<comment type="function">
    <text evidence="7 8">Involved in the regulation of the G1/S transition. Increases the DNA binding activity of E2F proteins after heterodimerization. The complex DPB/E2FC restricts cell division and lateral root initiation and may function as a negative regulator of E2F-regulated genes. The interaction with SKP2A is controlled by auxin.</text>
</comment>
<comment type="subunit">
    <text evidence="4 6 7 8 9">Heterodimer with non-phosphorylated E2FC. No interaction with phosphorylated E2FC. Interacts preferentially with E2FC, but also with E2FA and E2FB. Interacts with SKP2A. Targeted for proteasomal degradation by the SCF(SKP2A) E3 ubiquitin ligase complex.</text>
</comment>
<comment type="interaction">
    <interactant intactId="EBI-1774876">
        <id>Q9FNY2</id>
    </interactant>
    <interactant intactId="EBI-1774747">
        <id>Q9FNY0</id>
        <label>E2FA</label>
    </interactant>
    <organismsDiffer>false</organismsDiffer>
    <experiments>5</experiments>
</comment>
<comment type="interaction">
    <interactant intactId="EBI-1774876">
        <id>Q9FNY2</id>
    </interactant>
    <interactant intactId="EBI-1774719">
        <id>Q9FV71</id>
        <label>E2FB</label>
    </interactant>
    <organismsDiffer>false</organismsDiffer>
    <experiments>6</experiments>
</comment>
<comment type="subcellular location">
    <subcellularLocation>
        <location evidence="7">Nucleus</location>
    </subcellularLocation>
    <subcellularLocation>
        <location evidence="7">Cytoplasm</location>
    </subcellularLocation>
</comment>
<comment type="alternative products">
    <event type="alternative splicing"/>
    <isoform>
        <id>Q9FNY2-1</id>
        <name>1</name>
        <sequence type="displayed"/>
    </isoform>
    <isoform>
        <id>Q9FNY2-2</id>
        <name>2</name>
        <sequence type="described" ref="VSP_040734"/>
    </isoform>
</comment>
<comment type="tissue specificity">
    <text evidence="8">Ubiquitous.</text>
</comment>
<comment type="developmental stage">
    <text evidence="5">Expressed during the whole cell cycle.</text>
</comment>
<comment type="domain">
    <text>The DIM domain (182-263) is required for heterodimerization.</text>
</comment>
<comment type="PTM">
    <text evidence="8">Phosphorylated.</text>
</comment>
<comment type="similarity">
    <text evidence="10">Belongs to the E2F/DP family.</text>
</comment>
<comment type="sequence caution" evidence="10">
    <conflict type="erroneous gene model prediction">
        <sequence resource="EMBL-CDS" id="CAB83299"/>
    </conflict>
</comment>
<gene>
    <name type="primary">DPB</name>
    <name type="synonym">DP1</name>
    <name type="ordered locus">At5g03415</name>
    <name type="ORF">F12E4.160</name>
</gene>
<dbReference type="EMBL" id="AJ294532">
    <property type="protein sequence ID" value="CAC15484.1"/>
    <property type="molecule type" value="mRNA"/>
</dbReference>
<dbReference type="EMBL" id="AL162751">
    <property type="protein sequence ID" value="CAB83299.1"/>
    <property type="status" value="ALT_SEQ"/>
    <property type="molecule type" value="Genomic_DNA"/>
</dbReference>
<dbReference type="EMBL" id="CP002688">
    <property type="protein sequence ID" value="AED90599.1"/>
    <property type="molecule type" value="Genomic_DNA"/>
</dbReference>
<dbReference type="EMBL" id="CP002688">
    <property type="protein sequence ID" value="AED90600.1"/>
    <property type="molecule type" value="Genomic_DNA"/>
</dbReference>
<dbReference type="EMBL" id="AY086018">
    <property type="protein sequence ID" value="AAM63227.1"/>
    <property type="molecule type" value="mRNA"/>
</dbReference>
<dbReference type="EMBL" id="AK228148">
    <property type="protein sequence ID" value="BAF00104.1"/>
    <property type="molecule type" value="mRNA"/>
</dbReference>
<dbReference type="EMBL" id="AB493733">
    <property type="protein sequence ID" value="BAH30571.1"/>
    <property type="molecule type" value="mRNA"/>
</dbReference>
<dbReference type="PIR" id="T48364">
    <property type="entry name" value="T48364"/>
</dbReference>
<dbReference type="RefSeq" id="NP_001190214.1">
    <molecule id="Q9FNY2-2"/>
    <property type="nucleotide sequence ID" value="NM_001203285.1"/>
</dbReference>
<dbReference type="RefSeq" id="NP_850757.1">
    <molecule id="Q9FNY2-1"/>
    <property type="nucleotide sequence ID" value="NM_180426.3"/>
</dbReference>
<dbReference type="SMR" id="Q9FNY2"/>
<dbReference type="BioGRID" id="17123">
    <property type="interactions" value="23"/>
</dbReference>
<dbReference type="FunCoup" id="Q9FNY2">
    <property type="interactions" value="3092"/>
</dbReference>
<dbReference type="IntAct" id="Q9FNY2">
    <property type="interactions" value="14"/>
</dbReference>
<dbReference type="STRING" id="3702.Q9FNY2"/>
<dbReference type="GlyGen" id="Q9FNY2">
    <property type="glycosylation" value="1 site"/>
</dbReference>
<dbReference type="iPTMnet" id="Q9FNY2"/>
<dbReference type="PaxDb" id="3702-AT5G03415.1"/>
<dbReference type="ProteomicsDB" id="220396">
    <molecule id="Q9FNY2-1"/>
</dbReference>
<dbReference type="EnsemblPlants" id="AT5G03415.1">
    <molecule id="Q9FNY2-1"/>
    <property type="protein sequence ID" value="AT5G03415.1"/>
    <property type="gene ID" value="AT5G03415"/>
</dbReference>
<dbReference type="EnsemblPlants" id="AT5G03415.2">
    <molecule id="Q9FNY2-2"/>
    <property type="protein sequence ID" value="AT5G03415.2"/>
    <property type="gene ID" value="AT5G03415"/>
</dbReference>
<dbReference type="GeneID" id="831847"/>
<dbReference type="Gramene" id="AT5G03415.1">
    <molecule id="Q9FNY2-1"/>
    <property type="protein sequence ID" value="AT5G03415.1"/>
    <property type="gene ID" value="AT5G03415"/>
</dbReference>
<dbReference type="Gramene" id="AT5G03415.2">
    <molecule id="Q9FNY2-2"/>
    <property type="protein sequence ID" value="AT5G03415.2"/>
    <property type="gene ID" value="AT5G03415"/>
</dbReference>
<dbReference type="KEGG" id="ath:AT5G03415"/>
<dbReference type="Araport" id="AT5G03415"/>
<dbReference type="TAIR" id="AT5G03415">
    <property type="gene designation" value="DPB"/>
</dbReference>
<dbReference type="eggNOG" id="KOG1936">
    <property type="taxonomic scope" value="Eukaryota"/>
</dbReference>
<dbReference type="eggNOG" id="KOG2829">
    <property type="taxonomic scope" value="Eukaryota"/>
</dbReference>
<dbReference type="HOGENOM" id="CLU_039874_2_1_1"/>
<dbReference type="InParanoid" id="Q9FNY2"/>
<dbReference type="OMA" id="MANMFQH"/>
<dbReference type="PhylomeDB" id="Q9FNY2"/>
<dbReference type="PRO" id="PR:Q9FNY2"/>
<dbReference type="Proteomes" id="UP000006548">
    <property type="component" value="Chromosome 5"/>
</dbReference>
<dbReference type="ExpressionAtlas" id="Q9FNY2">
    <property type="expression patterns" value="baseline and differential"/>
</dbReference>
<dbReference type="GO" id="GO:0005737">
    <property type="term" value="C:cytoplasm"/>
    <property type="evidence" value="ECO:0000314"/>
    <property type="project" value="TAIR"/>
</dbReference>
<dbReference type="GO" id="GO:0070176">
    <property type="term" value="C:DRM complex"/>
    <property type="evidence" value="ECO:0000314"/>
    <property type="project" value="TAIR"/>
</dbReference>
<dbReference type="GO" id="GO:0005634">
    <property type="term" value="C:nucleus"/>
    <property type="evidence" value="ECO:0000314"/>
    <property type="project" value="TAIR"/>
</dbReference>
<dbReference type="GO" id="GO:0003677">
    <property type="term" value="F:DNA binding"/>
    <property type="evidence" value="ECO:0007669"/>
    <property type="project" value="UniProtKB-KW"/>
</dbReference>
<dbReference type="GO" id="GO:0046982">
    <property type="term" value="F:protein heterodimerization activity"/>
    <property type="evidence" value="ECO:0000353"/>
    <property type="project" value="TAIR"/>
</dbReference>
<dbReference type="GO" id="GO:0042023">
    <property type="term" value="P:DNA endoreduplication"/>
    <property type="evidence" value="ECO:0000315"/>
    <property type="project" value="TAIR"/>
</dbReference>
<dbReference type="GO" id="GO:0000082">
    <property type="term" value="P:G1/S transition of mitotic cell cycle"/>
    <property type="evidence" value="ECO:0000250"/>
    <property type="project" value="TAIR"/>
</dbReference>
<dbReference type="GO" id="GO:0051726">
    <property type="term" value="P:regulation of cell cycle"/>
    <property type="evidence" value="ECO:0007669"/>
    <property type="project" value="InterPro"/>
</dbReference>
<dbReference type="GO" id="GO:0006355">
    <property type="term" value="P:regulation of DNA-templated transcription"/>
    <property type="evidence" value="ECO:0007669"/>
    <property type="project" value="InterPro"/>
</dbReference>
<dbReference type="CDD" id="cd14458">
    <property type="entry name" value="DP_DD"/>
    <property type="match status" value="1"/>
</dbReference>
<dbReference type="FunFam" id="1.10.10.10:FF:000187">
    <property type="entry name" value="Transcription factor-like protein DPB"/>
    <property type="match status" value="1"/>
</dbReference>
<dbReference type="FunFam" id="1.20.140.80:FF:000002">
    <property type="entry name" value="Transcription factor-like protein DPB"/>
    <property type="match status" value="1"/>
</dbReference>
<dbReference type="Gene3D" id="1.20.140.80">
    <property type="entry name" value="Transcription factor DP"/>
    <property type="match status" value="1"/>
</dbReference>
<dbReference type="Gene3D" id="1.10.10.10">
    <property type="entry name" value="Winged helix-like DNA-binding domain superfamily/Winged helix DNA-binding domain"/>
    <property type="match status" value="1"/>
</dbReference>
<dbReference type="InterPro" id="IPR037241">
    <property type="entry name" value="E2F-DP_heterodim"/>
</dbReference>
<dbReference type="InterPro" id="IPR003316">
    <property type="entry name" value="E2F_WHTH_DNA-bd_dom"/>
</dbReference>
<dbReference type="InterPro" id="IPR038168">
    <property type="entry name" value="TF_DP_C_sf"/>
</dbReference>
<dbReference type="InterPro" id="IPR014889">
    <property type="entry name" value="Transc_factor_DP_C"/>
</dbReference>
<dbReference type="InterPro" id="IPR015648">
    <property type="entry name" value="Transcrpt_fac_DP"/>
</dbReference>
<dbReference type="InterPro" id="IPR036388">
    <property type="entry name" value="WH-like_DNA-bd_sf"/>
</dbReference>
<dbReference type="InterPro" id="IPR036390">
    <property type="entry name" value="WH_DNA-bd_sf"/>
</dbReference>
<dbReference type="PANTHER" id="PTHR12548">
    <property type="entry name" value="TRANSCRIPTION FACTOR DP"/>
    <property type="match status" value="1"/>
</dbReference>
<dbReference type="PANTHER" id="PTHR12548:SF9">
    <property type="entry name" value="TRANSCRIPTION FACTOR DP"/>
    <property type="match status" value="1"/>
</dbReference>
<dbReference type="Pfam" id="PF08781">
    <property type="entry name" value="DP"/>
    <property type="match status" value="1"/>
</dbReference>
<dbReference type="Pfam" id="PF02319">
    <property type="entry name" value="E2F_TDP"/>
    <property type="match status" value="1"/>
</dbReference>
<dbReference type="PIRSF" id="PIRSF009404">
    <property type="entry name" value="Transcription_factor_DP"/>
    <property type="match status" value="1"/>
</dbReference>
<dbReference type="SMART" id="SM01138">
    <property type="entry name" value="DP"/>
    <property type="match status" value="1"/>
</dbReference>
<dbReference type="SMART" id="SM01372">
    <property type="entry name" value="E2F_TDP"/>
    <property type="match status" value="1"/>
</dbReference>
<dbReference type="SUPFAM" id="SSF144074">
    <property type="entry name" value="E2F-DP heterodimerization region"/>
    <property type="match status" value="1"/>
</dbReference>
<dbReference type="SUPFAM" id="SSF46785">
    <property type="entry name" value="Winged helix' DNA-binding domain"/>
    <property type="match status" value="1"/>
</dbReference>
<evidence type="ECO:0000250" key="1"/>
<evidence type="ECO:0000255" key="2"/>
<evidence type="ECO:0000256" key="3">
    <source>
        <dbReference type="SAM" id="MobiDB-lite"/>
    </source>
</evidence>
<evidence type="ECO:0000269" key="4">
    <source>
    </source>
</evidence>
<evidence type="ECO:0000269" key="5">
    <source>
    </source>
</evidence>
<evidence type="ECO:0000269" key="6">
    <source>
    </source>
</evidence>
<evidence type="ECO:0000269" key="7">
    <source>
    </source>
</evidence>
<evidence type="ECO:0000269" key="8">
    <source>
    </source>
</evidence>
<evidence type="ECO:0000269" key="9">
    <source>
    </source>
</evidence>
<evidence type="ECO:0000305" key="10"/>
<keyword id="KW-0025">Alternative splicing</keyword>
<keyword id="KW-0131">Cell cycle</keyword>
<keyword id="KW-0175">Coiled coil</keyword>
<keyword id="KW-0963">Cytoplasm</keyword>
<keyword id="KW-0238">DNA-binding</keyword>
<keyword id="KW-0539">Nucleus</keyword>
<keyword id="KW-0597">Phosphoprotein</keyword>
<keyword id="KW-1185">Reference proteome</keyword>
<keyword id="KW-0678">Repressor</keyword>
<keyword id="KW-0804">Transcription</keyword>
<keyword id="KW-0805">Transcription regulation</keyword>
<name>DPB_ARATH</name>
<reference key="1">
    <citation type="journal article" date="2000" name="FEBS Lett.">
        <title>Characterization of two distinct DP-related genes from Arabidopsis thaliana.</title>
        <authorList>
            <person name="Magyar Z."/>
            <person name="Atanassova A."/>
            <person name="De Veylder L."/>
            <person name="Rombauts S."/>
            <person name="Inze D."/>
        </authorList>
    </citation>
    <scope>NUCLEOTIDE SEQUENCE [MRNA] (ISOFORM 1)</scope>
    <scope>INTERACTION WITH E2FA AND E2FB</scope>
    <source>
        <strain>cv. Columbia</strain>
    </source>
</reference>
<reference key="2">
    <citation type="journal article" date="2000" name="Nature">
        <title>Sequence and analysis of chromosome 5 of the plant Arabidopsis thaliana.</title>
        <authorList>
            <person name="Tabata S."/>
            <person name="Kaneko T."/>
            <person name="Nakamura Y."/>
            <person name="Kotani H."/>
            <person name="Kato T."/>
            <person name="Asamizu E."/>
            <person name="Miyajima N."/>
            <person name="Sasamoto S."/>
            <person name="Kimura T."/>
            <person name="Hosouchi T."/>
            <person name="Kawashima K."/>
            <person name="Kohara M."/>
            <person name="Matsumoto M."/>
            <person name="Matsuno A."/>
            <person name="Muraki A."/>
            <person name="Nakayama S."/>
            <person name="Nakazaki N."/>
            <person name="Naruo K."/>
            <person name="Okumura S."/>
            <person name="Shinpo S."/>
            <person name="Takeuchi C."/>
            <person name="Wada T."/>
            <person name="Watanabe A."/>
            <person name="Yamada M."/>
            <person name="Yasuda M."/>
            <person name="Sato S."/>
            <person name="de la Bastide M."/>
            <person name="Huang E."/>
            <person name="Spiegel L."/>
            <person name="Gnoj L."/>
            <person name="O'Shaughnessy A."/>
            <person name="Preston R."/>
            <person name="Habermann K."/>
            <person name="Murray J."/>
            <person name="Johnson D."/>
            <person name="Rohlfing T."/>
            <person name="Nelson J."/>
            <person name="Stoneking T."/>
            <person name="Pepin K."/>
            <person name="Spieth J."/>
            <person name="Sekhon M."/>
            <person name="Armstrong J."/>
            <person name="Becker M."/>
            <person name="Belter E."/>
            <person name="Cordum H."/>
            <person name="Cordes M."/>
            <person name="Courtney L."/>
            <person name="Courtney W."/>
            <person name="Dante M."/>
            <person name="Du H."/>
            <person name="Edwards J."/>
            <person name="Fryman J."/>
            <person name="Haakensen B."/>
            <person name="Lamar E."/>
            <person name="Latreille P."/>
            <person name="Leonard S."/>
            <person name="Meyer R."/>
            <person name="Mulvaney E."/>
            <person name="Ozersky P."/>
            <person name="Riley A."/>
            <person name="Strowmatt C."/>
            <person name="Wagner-McPherson C."/>
            <person name="Wollam A."/>
            <person name="Yoakum M."/>
            <person name="Bell M."/>
            <person name="Dedhia N."/>
            <person name="Parnell L."/>
            <person name="Shah R."/>
            <person name="Rodriguez M."/>
            <person name="Hoon See L."/>
            <person name="Vil D."/>
            <person name="Baker J."/>
            <person name="Kirchoff K."/>
            <person name="Toth K."/>
            <person name="King L."/>
            <person name="Bahret A."/>
            <person name="Miller B."/>
            <person name="Marra M.A."/>
            <person name="Martienssen R."/>
            <person name="McCombie W.R."/>
            <person name="Wilson R.K."/>
            <person name="Murphy G."/>
            <person name="Bancroft I."/>
            <person name="Volckaert G."/>
            <person name="Wambutt R."/>
            <person name="Duesterhoeft A."/>
            <person name="Stiekema W."/>
            <person name="Pohl T."/>
            <person name="Entian K.-D."/>
            <person name="Terryn N."/>
            <person name="Hartley N."/>
            <person name="Bent E."/>
            <person name="Johnson S."/>
            <person name="Langham S.-A."/>
            <person name="McCullagh B."/>
            <person name="Robben J."/>
            <person name="Grymonprez B."/>
            <person name="Zimmermann W."/>
            <person name="Ramsperger U."/>
            <person name="Wedler H."/>
            <person name="Balke K."/>
            <person name="Wedler E."/>
            <person name="Peters S."/>
            <person name="van Staveren M."/>
            <person name="Dirkse W."/>
            <person name="Mooijman P."/>
            <person name="Klein Lankhorst R."/>
            <person name="Weitzenegger T."/>
            <person name="Bothe G."/>
            <person name="Rose M."/>
            <person name="Hauf J."/>
            <person name="Berneiser S."/>
            <person name="Hempel S."/>
            <person name="Feldpausch M."/>
            <person name="Lamberth S."/>
            <person name="Villarroel R."/>
            <person name="Gielen J."/>
            <person name="Ardiles W."/>
            <person name="Bents O."/>
            <person name="Lemcke K."/>
            <person name="Kolesov G."/>
            <person name="Mayer K.F.X."/>
            <person name="Rudd S."/>
            <person name="Schoof H."/>
            <person name="Schueller C."/>
            <person name="Zaccaria P."/>
            <person name="Mewes H.-W."/>
            <person name="Bevan M."/>
            <person name="Fransz P.F."/>
        </authorList>
    </citation>
    <scope>NUCLEOTIDE SEQUENCE [LARGE SCALE GENOMIC DNA]</scope>
    <source>
        <strain>cv. Columbia</strain>
    </source>
</reference>
<reference key="3">
    <citation type="journal article" date="2017" name="Plant J.">
        <title>Araport11: a complete reannotation of the Arabidopsis thaliana reference genome.</title>
        <authorList>
            <person name="Cheng C.Y."/>
            <person name="Krishnakumar V."/>
            <person name="Chan A.P."/>
            <person name="Thibaud-Nissen F."/>
            <person name="Schobel S."/>
            <person name="Town C.D."/>
        </authorList>
    </citation>
    <scope>GENOME REANNOTATION</scope>
    <source>
        <strain>cv. Columbia</strain>
    </source>
</reference>
<reference key="4">
    <citation type="submission" date="2002-03" db="EMBL/GenBank/DDBJ databases">
        <title>Full-length cDNA from Arabidopsis thaliana.</title>
        <authorList>
            <person name="Brover V.V."/>
            <person name="Troukhan M.E."/>
            <person name="Alexandrov N.A."/>
            <person name="Lu Y.-P."/>
            <person name="Flavell R.B."/>
            <person name="Feldmann K.A."/>
        </authorList>
    </citation>
    <scope>NUCLEOTIDE SEQUENCE [LARGE SCALE MRNA] (ISOFORM 1)</scope>
</reference>
<reference key="5">
    <citation type="submission" date="2006-07" db="EMBL/GenBank/DDBJ databases">
        <title>Large-scale analysis of RIKEN Arabidopsis full-length (RAFL) cDNAs.</title>
        <authorList>
            <person name="Totoki Y."/>
            <person name="Seki M."/>
            <person name="Ishida J."/>
            <person name="Nakajima M."/>
            <person name="Enju A."/>
            <person name="Kamiya A."/>
            <person name="Narusaka M."/>
            <person name="Shin-i T."/>
            <person name="Nakagawa M."/>
            <person name="Sakamoto N."/>
            <person name="Oishi K."/>
            <person name="Kohara Y."/>
            <person name="Kobayashi M."/>
            <person name="Toyoda A."/>
            <person name="Sakaki Y."/>
            <person name="Sakurai T."/>
            <person name="Iida K."/>
            <person name="Akiyama K."/>
            <person name="Satou M."/>
            <person name="Toyoda T."/>
            <person name="Konagaya A."/>
            <person name="Carninci P."/>
            <person name="Kawai J."/>
            <person name="Hayashizaki Y."/>
            <person name="Shinozaki K."/>
        </authorList>
    </citation>
    <scope>NUCLEOTIDE SEQUENCE [LARGE SCALE MRNA] (ISOFORM 1)</scope>
    <source>
        <strain>cv. Columbia</strain>
    </source>
</reference>
<reference key="6">
    <citation type="submission" date="2009-03" db="EMBL/GenBank/DDBJ databases">
        <title>ORF cloning and analysis of Arabidopsis transcription factor genes.</title>
        <authorList>
            <person name="Fujita M."/>
            <person name="Mizukado S."/>
            <person name="Seki M."/>
            <person name="Shinozaki K."/>
            <person name="Mitsuda N."/>
            <person name="Takiguchi Y."/>
            <person name="Takagi M."/>
        </authorList>
    </citation>
    <scope>NUCLEOTIDE SEQUENCE [LARGE SCALE MRNA] (ISOFORM 1)</scope>
</reference>
<reference key="7">
    <citation type="journal article" date="2001" name="Plant Mol. Biol.">
        <title>Arabidopsis E2F1 binds a sequence present in the promoter of S-phase-regulated gene AtCDC6 and is a member of a multigene family with differential activities.</title>
        <authorList>
            <person name="de Jager S.M."/>
            <person name="Menges M."/>
            <person name="Bauer U.M."/>
            <person name="Murra J.A."/>
        </authorList>
    </citation>
    <scope>DEVELOPMENTAL STAGE</scope>
</reference>
<reference key="8">
    <citation type="journal article" date="2002" name="J. Biol. Chem.">
        <title>The E2F family of transcription factors from Arabidopsis thaliana. Novel and conserved components of the retinoblastoma/E2F pathway in plants.</title>
        <authorList>
            <person name="Mariconti L."/>
            <person name="Pellegrini B."/>
            <person name="Cantoni R."/>
            <person name="Stevens R."/>
            <person name="Bergounioux C."/>
            <person name="Cella R."/>
            <person name="Albani D."/>
        </authorList>
    </citation>
    <scope>INTERACTION WITH E2FA; E2FB AND E2FC</scope>
    <scope>GENE FAMILY</scope>
    <scope>NOMENCLATURE</scope>
</reference>
<reference key="9">
    <citation type="journal article" date="2002" name="Plant Physiol.">
        <title>Interaction of the Arabidopsis E2F and DP proteins confers their concomitant nuclear translocation and transactivation.</title>
        <authorList>
            <person name="Kosugi S."/>
            <person name="Ohashi Y."/>
        </authorList>
    </citation>
    <scope>FUNCTION</scope>
    <scope>INTERACTION WITH E2FA; E2FB AND E2FC</scope>
    <scope>SUBCELLULAR LOCATION</scope>
</reference>
<reference key="10">
    <citation type="journal article" date="2006" name="Plant Cell">
        <title>The balance between cell division and endoreplication depends on E2FC-DPB, transcription factors regulated by the ubiquitin-SCFSKP2A pathway in Arabidopsis.</title>
        <authorList>
            <person name="del Pozo J.C."/>
            <person name="Diaz-Trivino S."/>
            <person name="Cisneros N."/>
            <person name="Gutierrez C."/>
        </authorList>
    </citation>
    <scope>FUNCTION</scope>
    <scope>TISSUE SPECIFICITY</scope>
    <scope>PHOSPHORYLATION</scope>
    <scope>SUBUNIT</scope>
    <scope>INTERACTION WITH E2FC</scope>
</reference>
<reference key="11">
    <citation type="journal article" date="2010" name="Plant Cell">
        <title>The Arabidopsis cell cycle F-Box protein SKP2A binds to auxin.</title>
        <authorList>
            <person name="Jurado S."/>
            <person name="Abraham Z."/>
            <person name="Manzano C."/>
            <person name="Lopez-Torrejon G."/>
            <person name="Pacios L.F."/>
            <person name="Del Pozo J.C."/>
        </authorList>
    </citation>
    <scope>INTERACTION WITH SKP2A</scope>
</reference>
<proteinExistence type="evidence at protein level"/>
<protein>
    <recommendedName>
        <fullName>Transcription factor-like protein DPB</fullName>
    </recommendedName>
    <alternativeName>
        <fullName>DP-like protein B</fullName>
        <shortName>AtDPbB</shortName>
    </alternativeName>
    <alternativeName>
        <fullName>E2F dimerization partner protein B</fullName>
    </alternativeName>
</protein>
<organism>
    <name type="scientific">Arabidopsis thaliana</name>
    <name type="common">Mouse-ear cress</name>
    <dbReference type="NCBI Taxonomy" id="3702"/>
    <lineage>
        <taxon>Eukaryota</taxon>
        <taxon>Viridiplantae</taxon>
        <taxon>Streptophyta</taxon>
        <taxon>Embryophyta</taxon>
        <taxon>Tracheophyta</taxon>
        <taxon>Spermatophyta</taxon>
        <taxon>Magnoliopsida</taxon>
        <taxon>eudicotyledons</taxon>
        <taxon>Gunneridae</taxon>
        <taxon>Pentapetalae</taxon>
        <taxon>rosids</taxon>
        <taxon>malvids</taxon>
        <taxon>Brassicales</taxon>
        <taxon>Brassicaceae</taxon>
        <taxon>Camelineae</taxon>
        <taxon>Arabidopsis</taxon>
    </lineage>
</organism>